<evidence type="ECO:0000255" key="1">
    <source>
        <dbReference type="HAMAP-Rule" id="MF_00291"/>
    </source>
</evidence>
<evidence type="ECO:0000305" key="2"/>
<sequence>MPTVSMRDMLQAGVHFGHQTRYWNPKMGKYIFGARNKIHIINLEHTVPAFNEALAIVKQLGSQKKKVLFVGTKRAAQKSIKEQAERSNMPFVSHRWLGGMLTNYKTIRASIRRYRELETQSQDGTFEKLTKKEALVRTRIMEKLEKSIGGIKDMGGLPDALFIIDVEHERIAIQEANKLGIPVIGVVDTNSDPAGVDYVIPGNDDAIRAIKLYATAVADACIEGAADSASVPNKDEFVEEKAADAE</sequence>
<dbReference type="EMBL" id="CP000282">
    <property type="protein sequence ID" value="ABD81857.1"/>
    <property type="molecule type" value="Genomic_DNA"/>
</dbReference>
<dbReference type="RefSeq" id="WP_011469074.1">
    <property type="nucleotide sequence ID" value="NC_007912.1"/>
</dbReference>
<dbReference type="SMR" id="Q21HH2"/>
<dbReference type="STRING" id="203122.Sde_2597"/>
<dbReference type="GeneID" id="98614260"/>
<dbReference type="KEGG" id="sde:Sde_2597"/>
<dbReference type="eggNOG" id="COG0052">
    <property type="taxonomic scope" value="Bacteria"/>
</dbReference>
<dbReference type="HOGENOM" id="CLU_040318_1_2_6"/>
<dbReference type="OrthoDB" id="9808036at2"/>
<dbReference type="Proteomes" id="UP000001947">
    <property type="component" value="Chromosome"/>
</dbReference>
<dbReference type="GO" id="GO:0022627">
    <property type="term" value="C:cytosolic small ribosomal subunit"/>
    <property type="evidence" value="ECO:0007669"/>
    <property type="project" value="TreeGrafter"/>
</dbReference>
<dbReference type="GO" id="GO:0003735">
    <property type="term" value="F:structural constituent of ribosome"/>
    <property type="evidence" value="ECO:0007669"/>
    <property type="project" value="InterPro"/>
</dbReference>
<dbReference type="GO" id="GO:0006412">
    <property type="term" value="P:translation"/>
    <property type="evidence" value="ECO:0007669"/>
    <property type="project" value="UniProtKB-UniRule"/>
</dbReference>
<dbReference type="CDD" id="cd01425">
    <property type="entry name" value="RPS2"/>
    <property type="match status" value="1"/>
</dbReference>
<dbReference type="FunFam" id="1.10.287.610:FF:000001">
    <property type="entry name" value="30S ribosomal protein S2"/>
    <property type="match status" value="1"/>
</dbReference>
<dbReference type="Gene3D" id="3.40.50.10490">
    <property type="entry name" value="Glucose-6-phosphate isomerase like protein, domain 1"/>
    <property type="match status" value="1"/>
</dbReference>
<dbReference type="Gene3D" id="1.10.287.610">
    <property type="entry name" value="Helix hairpin bin"/>
    <property type="match status" value="1"/>
</dbReference>
<dbReference type="HAMAP" id="MF_00291_B">
    <property type="entry name" value="Ribosomal_uS2_B"/>
    <property type="match status" value="1"/>
</dbReference>
<dbReference type="InterPro" id="IPR001865">
    <property type="entry name" value="Ribosomal_uS2"/>
</dbReference>
<dbReference type="InterPro" id="IPR005706">
    <property type="entry name" value="Ribosomal_uS2_bac/mit/plastid"/>
</dbReference>
<dbReference type="InterPro" id="IPR018130">
    <property type="entry name" value="Ribosomal_uS2_CS"/>
</dbReference>
<dbReference type="InterPro" id="IPR023591">
    <property type="entry name" value="Ribosomal_uS2_flav_dom_sf"/>
</dbReference>
<dbReference type="NCBIfam" id="TIGR01011">
    <property type="entry name" value="rpsB_bact"/>
    <property type="match status" value="1"/>
</dbReference>
<dbReference type="PANTHER" id="PTHR12534">
    <property type="entry name" value="30S RIBOSOMAL PROTEIN S2 PROKARYOTIC AND ORGANELLAR"/>
    <property type="match status" value="1"/>
</dbReference>
<dbReference type="PANTHER" id="PTHR12534:SF0">
    <property type="entry name" value="SMALL RIBOSOMAL SUBUNIT PROTEIN US2M"/>
    <property type="match status" value="1"/>
</dbReference>
<dbReference type="Pfam" id="PF00318">
    <property type="entry name" value="Ribosomal_S2"/>
    <property type="match status" value="1"/>
</dbReference>
<dbReference type="PRINTS" id="PR00395">
    <property type="entry name" value="RIBOSOMALS2"/>
</dbReference>
<dbReference type="SUPFAM" id="SSF52313">
    <property type="entry name" value="Ribosomal protein S2"/>
    <property type="match status" value="1"/>
</dbReference>
<dbReference type="PROSITE" id="PS00962">
    <property type="entry name" value="RIBOSOMAL_S2_1"/>
    <property type="match status" value="1"/>
</dbReference>
<dbReference type="PROSITE" id="PS00963">
    <property type="entry name" value="RIBOSOMAL_S2_2"/>
    <property type="match status" value="1"/>
</dbReference>
<name>RS2_SACD2</name>
<proteinExistence type="inferred from homology"/>
<organism>
    <name type="scientific">Saccharophagus degradans (strain 2-40 / ATCC 43961 / DSM 17024)</name>
    <dbReference type="NCBI Taxonomy" id="203122"/>
    <lineage>
        <taxon>Bacteria</taxon>
        <taxon>Pseudomonadati</taxon>
        <taxon>Pseudomonadota</taxon>
        <taxon>Gammaproteobacteria</taxon>
        <taxon>Cellvibrionales</taxon>
        <taxon>Cellvibrionaceae</taxon>
        <taxon>Saccharophagus</taxon>
    </lineage>
</organism>
<feature type="chain" id="PRO_1000004059" description="Small ribosomal subunit protein uS2">
    <location>
        <begin position="1"/>
        <end position="246"/>
    </location>
</feature>
<keyword id="KW-1185">Reference proteome</keyword>
<keyword id="KW-0687">Ribonucleoprotein</keyword>
<keyword id="KW-0689">Ribosomal protein</keyword>
<gene>
    <name evidence="1" type="primary">rpsB</name>
    <name type="ordered locus">Sde_2597</name>
</gene>
<protein>
    <recommendedName>
        <fullName evidence="1">Small ribosomal subunit protein uS2</fullName>
    </recommendedName>
    <alternativeName>
        <fullName evidence="2">30S ribosomal protein S2</fullName>
    </alternativeName>
</protein>
<accession>Q21HH2</accession>
<reference key="1">
    <citation type="journal article" date="2008" name="PLoS Genet.">
        <title>Complete genome sequence of the complex carbohydrate-degrading marine bacterium, Saccharophagus degradans strain 2-40 T.</title>
        <authorList>
            <person name="Weiner R.M."/>
            <person name="Taylor L.E. II"/>
            <person name="Henrissat B."/>
            <person name="Hauser L."/>
            <person name="Land M."/>
            <person name="Coutinho P.M."/>
            <person name="Rancurel C."/>
            <person name="Saunders E.H."/>
            <person name="Longmire A.G."/>
            <person name="Zhang H."/>
            <person name="Bayer E.A."/>
            <person name="Gilbert H.J."/>
            <person name="Larimer F."/>
            <person name="Zhulin I.B."/>
            <person name="Ekborg N.A."/>
            <person name="Lamed R."/>
            <person name="Richardson P.M."/>
            <person name="Borovok I."/>
            <person name="Hutcheson S."/>
        </authorList>
    </citation>
    <scope>NUCLEOTIDE SEQUENCE [LARGE SCALE GENOMIC DNA]</scope>
    <source>
        <strain>2-40 / ATCC 43961 / DSM 17024</strain>
    </source>
</reference>
<comment type="similarity">
    <text evidence="1">Belongs to the universal ribosomal protein uS2 family.</text>
</comment>